<comment type="function">
    <text evidence="1">Catalyzes the oxidation of 3-carboxy-2-hydroxy-4-methylpentanoate (3-isopropylmalate) to 3-carboxy-4-methyl-2-oxopentanoate. The product decarboxylates to 4-methyl-2 oxopentanoate.</text>
</comment>
<comment type="catalytic activity">
    <reaction evidence="1">
        <text>(2R,3S)-3-isopropylmalate + NAD(+) = 4-methyl-2-oxopentanoate + CO2 + NADH</text>
        <dbReference type="Rhea" id="RHEA:32271"/>
        <dbReference type="ChEBI" id="CHEBI:16526"/>
        <dbReference type="ChEBI" id="CHEBI:17865"/>
        <dbReference type="ChEBI" id="CHEBI:35121"/>
        <dbReference type="ChEBI" id="CHEBI:57540"/>
        <dbReference type="ChEBI" id="CHEBI:57945"/>
        <dbReference type="EC" id="1.1.1.85"/>
    </reaction>
</comment>
<comment type="cofactor">
    <cofactor evidence="1">
        <name>Mg(2+)</name>
        <dbReference type="ChEBI" id="CHEBI:18420"/>
    </cofactor>
    <cofactor evidence="1">
        <name>Mn(2+)</name>
        <dbReference type="ChEBI" id="CHEBI:29035"/>
    </cofactor>
    <text evidence="1">Binds 1 Mg(2+) or Mn(2+) ion per subunit.</text>
</comment>
<comment type="pathway">
    <text evidence="1">Amino-acid biosynthesis; L-leucine biosynthesis; L-leucine from 3-methyl-2-oxobutanoate: step 3/4.</text>
</comment>
<comment type="subunit">
    <text evidence="1">Homodimer.</text>
</comment>
<comment type="subcellular location">
    <subcellularLocation>
        <location evidence="1">Cytoplasm</location>
    </subcellularLocation>
</comment>
<comment type="similarity">
    <text evidence="1">Belongs to the isocitrate and isopropylmalate dehydrogenases family. LeuB type 1 subfamily.</text>
</comment>
<feature type="chain" id="PRO_0000083712" description="3-isopropylmalate dehydrogenase">
    <location>
        <begin position="1"/>
        <end position="356"/>
    </location>
</feature>
<feature type="binding site" evidence="1">
    <location>
        <position position="95"/>
    </location>
    <ligand>
        <name>substrate</name>
    </ligand>
</feature>
<feature type="binding site" evidence="1">
    <location>
        <position position="105"/>
    </location>
    <ligand>
        <name>substrate</name>
    </ligand>
</feature>
<feature type="binding site" evidence="1">
    <location>
        <position position="133"/>
    </location>
    <ligand>
        <name>substrate</name>
    </ligand>
</feature>
<feature type="binding site" evidence="1">
    <location>
        <position position="223"/>
    </location>
    <ligand>
        <name>Mg(2+)</name>
        <dbReference type="ChEBI" id="CHEBI:18420"/>
    </ligand>
</feature>
<feature type="binding site" evidence="1">
    <location>
        <position position="223"/>
    </location>
    <ligand>
        <name>substrate</name>
    </ligand>
</feature>
<feature type="binding site" evidence="1">
    <location>
        <position position="247"/>
    </location>
    <ligand>
        <name>Mg(2+)</name>
        <dbReference type="ChEBI" id="CHEBI:18420"/>
    </ligand>
</feature>
<feature type="binding site" evidence="1">
    <location>
        <position position="251"/>
    </location>
    <ligand>
        <name>Mg(2+)</name>
        <dbReference type="ChEBI" id="CHEBI:18420"/>
    </ligand>
</feature>
<feature type="binding site" evidence="1">
    <location>
        <begin position="281"/>
        <end position="293"/>
    </location>
    <ligand>
        <name>NAD(+)</name>
        <dbReference type="ChEBI" id="CHEBI:57540"/>
    </ligand>
</feature>
<feature type="site" description="Important for catalysis" evidence="1">
    <location>
        <position position="140"/>
    </location>
</feature>
<feature type="site" description="Important for catalysis" evidence="1">
    <location>
        <position position="191"/>
    </location>
</feature>
<accession>Q9JZI9</accession>
<name>LEU3_NEIMB</name>
<keyword id="KW-0028">Amino-acid biosynthesis</keyword>
<keyword id="KW-0100">Branched-chain amino acid biosynthesis</keyword>
<keyword id="KW-0963">Cytoplasm</keyword>
<keyword id="KW-0432">Leucine biosynthesis</keyword>
<keyword id="KW-0460">Magnesium</keyword>
<keyword id="KW-0464">Manganese</keyword>
<keyword id="KW-0479">Metal-binding</keyword>
<keyword id="KW-0520">NAD</keyword>
<keyword id="KW-0560">Oxidoreductase</keyword>
<keyword id="KW-1185">Reference proteome</keyword>
<reference key="1">
    <citation type="journal article" date="2000" name="Science">
        <title>Complete genome sequence of Neisseria meningitidis serogroup B strain MC58.</title>
        <authorList>
            <person name="Tettelin H."/>
            <person name="Saunders N.J."/>
            <person name="Heidelberg J.F."/>
            <person name="Jeffries A.C."/>
            <person name="Nelson K.E."/>
            <person name="Eisen J.A."/>
            <person name="Ketchum K.A."/>
            <person name="Hood D.W."/>
            <person name="Peden J.F."/>
            <person name="Dodson R.J."/>
            <person name="Nelson W.C."/>
            <person name="Gwinn M.L."/>
            <person name="DeBoy R.T."/>
            <person name="Peterson J.D."/>
            <person name="Hickey E.K."/>
            <person name="Haft D.H."/>
            <person name="Salzberg S.L."/>
            <person name="White O."/>
            <person name="Fleischmann R.D."/>
            <person name="Dougherty B.A."/>
            <person name="Mason T.M."/>
            <person name="Ciecko A."/>
            <person name="Parksey D.S."/>
            <person name="Blair E."/>
            <person name="Cittone H."/>
            <person name="Clark E.B."/>
            <person name="Cotton M.D."/>
            <person name="Utterback T.R."/>
            <person name="Khouri H.M."/>
            <person name="Qin H."/>
            <person name="Vamathevan J.J."/>
            <person name="Gill J."/>
            <person name="Scarlato V."/>
            <person name="Masignani V."/>
            <person name="Pizza M."/>
            <person name="Grandi G."/>
            <person name="Sun L."/>
            <person name="Smith H.O."/>
            <person name="Fraser C.M."/>
            <person name="Moxon E.R."/>
            <person name="Rappuoli R."/>
            <person name="Venter J.C."/>
        </authorList>
    </citation>
    <scope>NUCLEOTIDE SEQUENCE [LARGE SCALE GENOMIC DNA]</scope>
    <source>
        <strain>ATCC BAA-335 / MC58</strain>
    </source>
</reference>
<organism>
    <name type="scientific">Neisseria meningitidis serogroup B (strain ATCC BAA-335 / MC58)</name>
    <dbReference type="NCBI Taxonomy" id="122586"/>
    <lineage>
        <taxon>Bacteria</taxon>
        <taxon>Pseudomonadati</taxon>
        <taxon>Pseudomonadota</taxon>
        <taxon>Betaproteobacteria</taxon>
        <taxon>Neisseriales</taxon>
        <taxon>Neisseriaceae</taxon>
        <taxon>Neisseria</taxon>
    </lineage>
</organism>
<dbReference type="EC" id="1.1.1.85" evidence="1"/>
<dbReference type="EMBL" id="AE002098">
    <property type="protein sequence ID" value="AAF41430.1"/>
    <property type="molecule type" value="Genomic_DNA"/>
</dbReference>
<dbReference type="PIR" id="E81130">
    <property type="entry name" value="E81130"/>
</dbReference>
<dbReference type="RefSeq" id="NP_274065.1">
    <property type="nucleotide sequence ID" value="NC_003112.2"/>
</dbReference>
<dbReference type="RefSeq" id="WP_002213431.1">
    <property type="nucleotide sequence ID" value="NC_003112.2"/>
</dbReference>
<dbReference type="SMR" id="Q9JZI9"/>
<dbReference type="FunCoup" id="Q9JZI9">
    <property type="interactions" value="443"/>
</dbReference>
<dbReference type="STRING" id="122586.NMB1031"/>
<dbReference type="PaxDb" id="122586-NMB1031"/>
<dbReference type="GeneID" id="93385951"/>
<dbReference type="KEGG" id="nme:NMB1031"/>
<dbReference type="PATRIC" id="fig|122586.8.peg.1315"/>
<dbReference type="HOGENOM" id="CLU_031953_0_3_4"/>
<dbReference type="InParanoid" id="Q9JZI9"/>
<dbReference type="OrthoDB" id="5289857at2"/>
<dbReference type="UniPathway" id="UPA00048">
    <property type="reaction ID" value="UER00072"/>
</dbReference>
<dbReference type="Proteomes" id="UP000000425">
    <property type="component" value="Chromosome"/>
</dbReference>
<dbReference type="GO" id="GO:0005829">
    <property type="term" value="C:cytosol"/>
    <property type="evidence" value="ECO:0000318"/>
    <property type="project" value="GO_Central"/>
</dbReference>
<dbReference type="GO" id="GO:0003862">
    <property type="term" value="F:3-isopropylmalate dehydrogenase activity"/>
    <property type="evidence" value="ECO:0000318"/>
    <property type="project" value="GO_Central"/>
</dbReference>
<dbReference type="GO" id="GO:0000287">
    <property type="term" value="F:magnesium ion binding"/>
    <property type="evidence" value="ECO:0007669"/>
    <property type="project" value="InterPro"/>
</dbReference>
<dbReference type="GO" id="GO:0051287">
    <property type="term" value="F:NAD binding"/>
    <property type="evidence" value="ECO:0007669"/>
    <property type="project" value="InterPro"/>
</dbReference>
<dbReference type="GO" id="GO:0009098">
    <property type="term" value="P:L-leucine biosynthetic process"/>
    <property type="evidence" value="ECO:0000318"/>
    <property type="project" value="GO_Central"/>
</dbReference>
<dbReference type="FunFam" id="3.40.718.10:FF:000004">
    <property type="entry name" value="3-isopropylmalate dehydrogenase"/>
    <property type="match status" value="1"/>
</dbReference>
<dbReference type="Gene3D" id="3.40.718.10">
    <property type="entry name" value="Isopropylmalate Dehydrogenase"/>
    <property type="match status" value="1"/>
</dbReference>
<dbReference type="HAMAP" id="MF_01033">
    <property type="entry name" value="LeuB_type1"/>
    <property type="match status" value="1"/>
</dbReference>
<dbReference type="InterPro" id="IPR019818">
    <property type="entry name" value="IsoCit/isopropylmalate_DH_CS"/>
</dbReference>
<dbReference type="InterPro" id="IPR024084">
    <property type="entry name" value="IsoPropMal-DH-like_dom"/>
</dbReference>
<dbReference type="InterPro" id="IPR004429">
    <property type="entry name" value="Isopropylmalate_DH"/>
</dbReference>
<dbReference type="NCBIfam" id="TIGR00169">
    <property type="entry name" value="leuB"/>
    <property type="match status" value="1"/>
</dbReference>
<dbReference type="PANTHER" id="PTHR42979">
    <property type="entry name" value="3-ISOPROPYLMALATE DEHYDROGENASE"/>
    <property type="match status" value="1"/>
</dbReference>
<dbReference type="PANTHER" id="PTHR42979:SF1">
    <property type="entry name" value="3-ISOPROPYLMALATE DEHYDROGENASE"/>
    <property type="match status" value="1"/>
</dbReference>
<dbReference type="Pfam" id="PF00180">
    <property type="entry name" value="Iso_dh"/>
    <property type="match status" value="1"/>
</dbReference>
<dbReference type="SMART" id="SM01329">
    <property type="entry name" value="Iso_dh"/>
    <property type="match status" value="1"/>
</dbReference>
<dbReference type="SUPFAM" id="SSF53659">
    <property type="entry name" value="Isocitrate/Isopropylmalate dehydrogenase-like"/>
    <property type="match status" value="1"/>
</dbReference>
<dbReference type="PROSITE" id="PS00470">
    <property type="entry name" value="IDH_IMDH"/>
    <property type="match status" value="1"/>
</dbReference>
<proteinExistence type="inferred from homology"/>
<evidence type="ECO:0000255" key="1">
    <source>
        <dbReference type="HAMAP-Rule" id="MF_01033"/>
    </source>
</evidence>
<sequence>MTKHIAILRGDGIGPEIVAETVRVLDKLIAQGLDAGYEYAPLGGEAYDEYGHPYPEFTQNLCRKADAVLLGAVGSPQYDNLDRPLRPERGLLAIRKDLNLFANLRPAVLYPELANASTLKPEIVAGLDILIVRELTGDIYFGEPRGIRVLENGEREGYNTMKYSESEIRRIAHVAFQSAQKRSKKVCSVGKANVLETTELWREIFEEIGKEYPDVELSHMYVDNAAMQLVRAPKQFDVIATGNIFGDILSDEASMLTGSIGMLPSASLDENGKGLYEPSHGSAPDIAGQNKANPLATILSLAMLLRYSLNDEARAQQVENAVQKVLQQGLRTSDIYEEGTKLVSCSEMGDAVLAAL</sequence>
<protein>
    <recommendedName>
        <fullName evidence="1">3-isopropylmalate dehydrogenase</fullName>
        <ecNumber evidence="1">1.1.1.85</ecNumber>
    </recommendedName>
    <alternativeName>
        <fullName evidence="1">3-IPM-DH</fullName>
    </alternativeName>
    <alternativeName>
        <fullName evidence="1">Beta-IPM dehydrogenase</fullName>
        <shortName evidence="1">IMDH</shortName>
    </alternativeName>
</protein>
<gene>
    <name evidence="1" type="primary">leuB</name>
    <name type="ordered locus">NMB1031</name>
</gene>